<name>FII_BPN15</name>
<accession>O64324</accession>
<protein>
    <recommendedName>
        <fullName evidence="2">Head-tail joining protein</fullName>
    </recommendedName>
    <alternativeName>
        <fullName evidence="3">Gene product 10</fullName>
        <shortName>gp10</shortName>
    </alternativeName>
</protein>
<evidence type="ECO:0000250" key="1">
    <source>
        <dbReference type="UniProtKB" id="P03714"/>
    </source>
</evidence>
<evidence type="ECO:0000303" key="2">
    <source>
    </source>
</evidence>
<evidence type="ECO:0000305" key="3"/>
<evidence type="ECO:0000312" key="4">
    <source>
        <dbReference type="EMBL" id="AAC19047.1"/>
    </source>
</evidence>
<evidence type="ECO:0000312" key="5">
    <source>
        <dbReference type="Proteomes" id="UP000002132"/>
    </source>
</evidence>
<gene>
    <name evidence="4" type="primary">gene 10</name>
</gene>
<dbReference type="EMBL" id="AF064539">
    <property type="protein sequence ID" value="AAC19047.1"/>
    <property type="molecule type" value="Genomic_DNA"/>
</dbReference>
<dbReference type="PIR" id="T13096">
    <property type="entry name" value="T13096"/>
</dbReference>
<dbReference type="RefSeq" id="NP_046905.1">
    <property type="nucleotide sequence ID" value="NC_001901.1"/>
</dbReference>
<dbReference type="SMR" id="O64324"/>
<dbReference type="GeneID" id="1261649"/>
<dbReference type="KEGG" id="vg:1261649"/>
<dbReference type="Proteomes" id="UP000002132">
    <property type="component" value="Genome"/>
</dbReference>
<dbReference type="GO" id="GO:0030430">
    <property type="term" value="C:host cell cytoplasm"/>
    <property type="evidence" value="ECO:0007669"/>
    <property type="project" value="UniProtKB-SubCell"/>
</dbReference>
<dbReference type="GO" id="GO:0019028">
    <property type="term" value="C:viral capsid"/>
    <property type="evidence" value="ECO:0007669"/>
    <property type="project" value="UniProtKB-KW"/>
</dbReference>
<dbReference type="GO" id="GO:0019068">
    <property type="term" value="P:virion assembly"/>
    <property type="evidence" value="ECO:0007669"/>
    <property type="project" value="InterPro"/>
</dbReference>
<dbReference type="Gene3D" id="2.40.10.180">
    <property type="entry name" value="Phage tail proteins"/>
    <property type="match status" value="1"/>
</dbReference>
<dbReference type="InterPro" id="IPR053734">
    <property type="entry name" value="Phage_Head-Tail_Connect_sf"/>
</dbReference>
<dbReference type="InterPro" id="IPR008018">
    <property type="entry name" value="Phage_tail_attach_FII"/>
</dbReference>
<dbReference type="Pfam" id="PF05354">
    <property type="entry name" value="Phage_attach"/>
    <property type="match status" value="1"/>
</dbReference>
<dbReference type="SUPFAM" id="SSF69279">
    <property type="entry name" value="Phage tail proteins"/>
    <property type="match status" value="1"/>
</dbReference>
<comment type="function">
    <text evidence="1">Plays a role in virion assembly by joining the head and the tail at the last step of morphogenesis. Six Head-tail joining protein bind the DNA-filled capsid after binding to the Head completion protein, in turn binding the pre-assembled tail.</text>
</comment>
<comment type="subunit">
    <text evidence="1">May bind Head completion protein and Tail shaft cap.</text>
</comment>
<comment type="subcellular location">
    <subcellularLocation>
        <location>Virion</location>
    </subcellularLocation>
    <subcellularLocation>
        <location evidence="1">Host cytoplasm</location>
    </subcellularLocation>
</comment>
<sequence length="117" mass="12485">MADFDNLFDEAMSRADGAIRGVMGTEAKVMSGTLSGATLVGVFDDPENIGYAGAGIRVEGTSPTLFVKTSTVSQLQRMDTLTINGRQFWVDRVGPDDCGSCHIWLGNGTPPASSRRR</sequence>
<feature type="chain" id="PRO_0000432904" description="Head-tail joining protein">
    <location>
        <begin position="1"/>
        <end position="117"/>
    </location>
</feature>
<organismHost>
    <name type="scientific">Escherichia coli</name>
    <dbReference type="NCBI Taxonomy" id="562"/>
</organismHost>
<organism evidence="5">
    <name type="scientific">Escherichia phage N15</name>
    <name type="common">Bacteriophage N15</name>
    <dbReference type="NCBI Taxonomy" id="1604876"/>
    <lineage>
        <taxon>Viruses</taxon>
        <taxon>Duplodnaviria</taxon>
        <taxon>Heunggongvirae</taxon>
        <taxon>Uroviricota</taxon>
        <taxon>Caudoviricetes</taxon>
        <taxon>Ravinvirus</taxon>
        <taxon>Ravinvirus N15</taxon>
    </lineage>
</organism>
<keyword id="KW-0167">Capsid protein</keyword>
<keyword id="KW-1035">Host cytoplasm</keyword>
<keyword id="KW-0426">Late protein</keyword>
<keyword id="KW-1185">Reference proteome</keyword>
<keyword id="KW-0118">Viral capsid assembly</keyword>
<keyword id="KW-1188">Viral release from host cell</keyword>
<keyword id="KW-0946">Virion</keyword>
<proteinExistence type="inferred from homology"/>
<reference key="1">
    <citation type="journal article" date="2000" name="J. Mol. Biol.">
        <title>Genomic sequence and analysis of the atypical temperate bacteriophage N15.</title>
        <authorList>
            <person name="Ravin V."/>
            <person name="Ravin N."/>
            <person name="Casjens S."/>
            <person name="Ford M.E."/>
            <person name="Hatfull G.F."/>
            <person name="Hendrix R.W."/>
        </authorList>
    </citation>
    <scope>NUCLEOTIDE SEQUENCE [LARGE SCALE GENOMIC DNA]</scope>
    <scope>IDENTIFICATION</scope>
</reference>